<comment type="subunit">
    <text evidence="1">Interacts with MAP1B.</text>
</comment>
<comment type="subcellular location">
    <subcellularLocation>
        <location evidence="3">Cell projection</location>
        <location evidence="3">Dendrite</location>
    </subcellularLocation>
    <subcellularLocation>
        <location evidence="4">Membrane</location>
        <topology evidence="4">Multi-pass membrane protein</topology>
    </subcellularLocation>
</comment>
<comment type="tissue specificity">
    <text evidence="3">Broadly expressed in brain where it is specifically expressed by neurons (at protein level). Also detected in some cells of arterioles, intestine, lung and testis (at protein level).</text>
</comment>
<comment type="developmental stage">
    <text evidence="3">Detected at 7 dpc, levels increase from 11 dpc to 17 dpc.</text>
</comment>
<comment type="induction">
    <text evidence="3">Up-regulated by erythropoietin (at protein level).</text>
</comment>
<comment type="similarity">
    <text evidence="4">Belongs to the TMEM185 family.</text>
</comment>
<proteinExistence type="evidence at protein level"/>
<sequence>MNLRGLFQDFNPSKFLIYACLLLFSVLLALRLDGIIQWSYWAVFAPIWLWKLMVIVGASVGTGVWARNPQYRAEGETCVEFKAMLIAVGIHLLLLMFEVLVCDRIERGSHFWLLVFMPLFFVSPVSVAACVWGFRHDRSLELEILCSVNILQFIFIALRLDKIIHWPWLVVCVPLWILMSFLCLVVLYYIVWSVLFLRSMDVIAEQRRTHITMALSWMTIVVPLLTFEILLVHKLDGHNAFSCIPIFVPLWLSLITLMATTFGQKGGNHWWFGIRKDFCQFLLEIFPFLREYGNISYDLHHEDSEETEETPVPEPPKIAPMFRKKARVVITQSPGKYVLPPPKLNIEMPD</sequence>
<organism>
    <name type="scientific">Mus musculus</name>
    <name type="common">Mouse</name>
    <dbReference type="NCBI Taxonomy" id="10090"/>
    <lineage>
        <taxon>Eukaryota</taxon>
        <taxon>Metazoa</taxon>
        <taxon>Chordata</taxon>
        <taxon>Craniata</taxon>
        <taxon>Vertebrata</taxon>
        <taxon>Euteleostomi</taxon>
        <taxon>Mammalia</taxon>
        <taxon>Eutheria</taxon>
        <taxon>Euarchontoglires</taxon>
        <taxon>Glires</taxon>
        <taxon>Rodentia</taxon>
        <taxon>Myomorpha</taxon>
        <taxon>Muroidea</taxon>
        <taxon>Muridae</taxon>
        <taxon>Murinae</taxon>
        <taxon>Mus</taxon>
        <taxon>Mus</taxon>
    </lineage>
</organism>
<feature type="chain" id="PRO_0000423780" description="Transmembrane protein 185A">
    <location>
        <begin position="1"/>
        <end position="350"/>
    </location>
</feature>
<feature type="transmembrane region" description="Helical" evidence="2">
    <location>
        <begin position="16"/>
        <end position="36"/>
    </location>
</feature>
<feature type="transmembrane region" description="Helical" evidence="2">
    <location>
        <begin position="41"/>
        <end position="61"/>
    </location>
</feature>
<feature type="transmembrane region" description="Helical" evidence="2">
    <location>
        <begin position="81"/>
        <end position="101"/>
    </location>
</feature>
<feature type="transmembrane region" description="Helical" evidence="2">
    <location>
        <begin position="111"/>
        <end position="131"/>
    </location>
</feature>
<feature type="transmembrane region" description="Helical" evidence="2">
    <location>
        <begin position="177"/>
        <end position="197"/>
    </location>
</feature>
<feature type="transmembrane region" description="Helical" evidence="2">
    <location>
        <begin position="211"/>
        <end position="231"/>
    </location>
</feature>
<feature type="transmembrane region" description="Helical" evidence="2">
    <location>
        <begin position="240"/>
        <end position="260"/>
    </location>
</feature>
<feature type="region of interest" description="Mediates interaction with MAP1B" evidence="1">
    <location>
        <begin position="298"/>
        <end position="350"/>
    </location>
</feature>
<evidence type="ECO:0000250" key="1"/>
<evidence type="ECO:0000255" key="2"/>
<evidence type="ECO:0000269" key="3">
    <source>
    </source>
</evidence>
<evidence type="ECO:0000305" key="4"/>
<accession>A2AF53</accession>
<gene>
    <name type="primary">Tmem185a</name>
    <name type="synonym">Ee3</name>
    <name type="synonym">Fam11a</name>
</gene>
<reference key="1">
    <citation type="journal article" date="2009" name="PLoS Biol.">
        <title>Lineage-specific biology revealed by a finished genome assembly of the mouse.</title>
        <authorList>
            <person name="Church D.M."/>
            <person name="Goodstadt L."/>
            <person name="Hillier L.W."/>
            <person name="Zody M.C."/>
            <person name="Goldstein S."/>
            <person name="She X."/>
            <person name="Bult C.J."/>
            <person name="Agarwala R."/>
            <person name="Cherry J.L."/>
            <person name="DiCuccio M."/>
            <person name="Hlavina W."/>
            <person name="Kapustin Y."/>
            <person name="Meric P."/>
            <person name="Maglott D."/>
            <person name="Birtle Z."/>
            <person name="Marques A.C."/>
            <person name="Graves T."/>
            <person name="Zhou S."/>
            <person name="Teague B."/>
            <person name="Potamousis K."/>
            <person name="Churas C."/>
            <person name="Place M."/>
            <person name="Herschleb J."/>
            <person name="Runnheim R."/>
            <person name="Forrest D."/>
            <person name="Amos-Landgraf J."/>
            <person name="Schwartz D.C."/>
            <person name="Cheng Z."/>
            <person name="Lindblad-Toh K."/>
            <person name="Eichler E.E."/>
            <person name="Ponting C.P."/>
        </authorList>
    </citation>
    <scope>NUCLEOTIDE SEQUENCE [LARGE SCALE GENOMIC DNA]</scope>
    <source>
        <strain>C57BL/6J</strain>
    </source>
</reference>
<reference key="2">
    <citation type="journal article" date="2004" name="Genome Res.">
        <title>The status, quality, and expansion of the NIH full-length cDNA project: the Mammalian Gene Collection (MGC).</title>
        <authorList>
            <consortium name="The MGC Project Team"/>
        </authorList>
    </citation>
    <scope>NUCLEOTIDE SEQUENCE [LARGE SCALE MRNA]</scope>
    <source>
        <tissue>Brain</tissue>
    </source>
</reference>
<reference key="3">
    <citation type="journal article" date="2004" name="J. Neurochem.">
        <title>Cloning of a novel neuronally expressed orphan G-protein-coupled receptor which is up-regulated by erythropoietin, interacts with microtubule-associated protein 1b and colocalizes with the 5-hydroxytryptamine 2a receptor.</title>
        <authorList>
            <person name="Maurer M.H."/>
            <person name="Gruenewald S."/>
            <person name="Gassler N."/>
            <person name="Rossner M."/>
            <person name="Propst F."/>
            <person name="Wuerz R."/>
            <person name="Weber D."/>
            <person name="Kuner T."/>
            <person name="Kuschinsky W."/>
            <person name="Schneider A."/>
        </authorList>
    </citation>
    <scope>SUBCELLULAR LOCATION</scope>
    <scope>TISSUE SPECIFICITY</scope>
    <scope>DEVELOPMENTAL STAGE</scope>
    <scope>INDUCTION BY ERYTHROPOIETIN</scope>
</reference>
<keyword id="KW-0966">Cell projection</keyword>
<keyword id="KW-0472">Membrane</keyword>
<keyword id="KW-1185">Reference proteome</keyword>
<keyword id="KW-0812">Transmembrane</keyword>
<keyword id="KW-1133">Transmembrane helix</keyword>
<name>T185A_MOUSE</name>
<dbReference type="EMBL" id="AL672026">
    <property type="status" value="NOT_ANNOTATED_CDS"/>
    <property type="molecule type" value="Genomic_DNA"/>
</dbReference>
<dbReference type="EMBL" id="BC138670">
    <property type="protein sequence ID" value="AAI38671.1"/>
    <property type="molecule type" value="mRNA"/>
</dbReference>
<dbReference type="EMBL" id="BC145368">
    <property type="protein sequence ID" value="AAI45369.1"/>
    <property type="molecule type" value="mRNA"/>
</dbReference>
<dbReference type="CCDS" id="CCDS90721.1"/>
<dbReference type="RefSeq" id="NP_001344679.1">
    <property type="nucleotide sequence ID" value="NM_001357750.1"/>
</dbReference>
<dbReference type="RefSeq" id="XP_006528044.1">
    <property type="nucleotide sequence ID" value="XM_006527981.2"/>
</dbReference>
<dbReference type="BioGRID" id="231803">
    <property type="interactions" value="2"/>
</dbReference>
<dbReference type="FunCoup" id="A2AF53">
    <property type="interactions" value="147"/>
</dbReference>
<dbReference type="iPTMnet" id="A2AF53"/>
<dbReference type="PhosphoSitePlus" id="A2AF53"/>
<dbReference type="SwissPalm" id="A2AF53"/>
<dbReference type="PaxDb" id="10090-ENSMUSP00000099043"/>
<dbReference type="ProteomicsDB" id="254804"/>
<dbReference type="Antibodypedia" id="74111">
    <property type="antibodies" value="56 antibodies from 17 providers"/>
</dbReference>
<dbReference type="Ensembl" id="ENSMUST00000114630.3">
    <property type="protein sequence ID" value="ENSMUSP00000110277.3"/>
    <property type="gene ID" value="ENSMUSG00000073139.10"/>
</dbReference>
<dbReference type="GeneID" id="236848"/>
<dbReference type="UCSC" id="uc012hjm.1">
    <property type="organism name" value="mouse"/>
</dbReference>
<dbReference type="AGR" id="MGI:2448555"/>
<dbReference type="MGI" id="MGI:2448555">
    <property type="gene designation" value="Tmem185a"/>
</dbReference>
<dbReference type="VEuPathDB" id="HostDB:ENSMUSG00000073139"/>
<dbReference type="eggNOG" id="KOG3879">
    <property type="taxonomic scope" value="Eukaryota"/>
</dbReference>
<dbReference type="GeneTree" id="ENSGT00940000158388"/>
<dbReference type="HOGENOM" id="CLU_053027_0_0_1"/>
<dbReference type="InParanoid" id="A2AF53"/>
<dbReference type="OMA" id="HEFGKHD"/>
<dbReference type="OrthoDB" id="72976at2759"/>
<dbReference type="PhylomeDB" id="A2AF53"/>
<dbReference type="BioGRID-ORCS" id="236848">
    <property type="hits" value="1 hit in 61 CRISPR screens"/>
</dbReference>
<dbReference type="ChiTaRS" id="Tmem185a">
    <property type="organism name" value="mouse"/>
</dbReference>
<dbReference type="PRO" id="PR:A2AF53"/>
<dbReference type="Proteomes" id="UP000000589">
    <property type="component" value="Chromosome X"/>
</dbReference>
<dbReference type="RNAct" id="A2AF53">
    <property type="molecule type" value="protein"/>
</dbReference>
<dbReference type="Bgee" id="ENSMUSG00000073139">
    <property type="expression patterns" value="Expressed in primitive streak and 257 other cell types or tissues"/>
</dbReference>
<dbReference type="ExpressionAtlas" id="A2AF53">
    <property type="expression patterns" value="baseline and differential"/>
</dbReference>
<dbReference type="GO" id="GO:0030425">
    <property type="term" value="C:dendrite"/>
    <property type="evidence" value="ECO:0000314"/>
    <property type="project" value="UniProtKB"/>
</dbReference>
<dbReference type="GO" id="GO:0016020">
    <property type="term" value="C:membrane"/>
    <property type="evidence" value="ECO:0007669"/>
    <property type="project" value="UniProtKB-SubCell"/>
</dbReference>
<dbReference type="InterPro" id="IPR019396">
    <property type="entry name" value="TM_Fragile-X-F-assoc"/>
</dbReference>
<dbReference type="PANTHER" id="PTHR13568">
    <property type="entry name" value="FAM11A, B PROTEIN"/>
    <property type="match status" value="1"/>
</dbReference>
<dbReference type="PANTHER" id="PTHR13568:SF2">
    <property type="entry name" value="TRANSMEMBRANE PROTEIN 185A"/>
    <property type="match status" value="1"/>
</dbReference>
<dbReference type="Pfam" id="PF10269">
    <property type="entry name" value="Tmemb_185A"/>
    <property type="match status" value="1"/>
</dbReference>
<protein>
    <recommendedName>
        <fullName>Transmembrane protein 185A</fullName>
    </recommendedName>
    <alternativeName>
        <fullName>Erythropoietin-induced EST 3</fullName>
    </alternativeName>
    <alternativeName>
        <fullName>Protein FAM11A</fullName>
    </alternativeName>
</protein>